<name>MOAE1_MYCTU</name>
<reference key="1">
    <citation type="journal article" date="1998" name="Nature">
        <title>Deciphering the biology of Mycobacterium tuberculosis from the complete genome sequence.</title>
        <authorList>
            <person name="Cole S.T."/>
            <person name="Brosch R."/>
            <person name="Parkhill J."/>
            <person name="Garnier T."/>
            <person name="Churcher C.M."/>
            <person name="Harris D.E."/>
            <person name="Gordon S.V."/>
            <person name="Eiglmeier K."/>
            <person name="Gas S."/>
            <person name="Barry C.E. III"/>
            <person name="Tekaia F."/>
            <person name="Badcock K."/>
            <person name="Basham D."/>
            <person name="Brown D."/>
            <person name="Chillingworth T."/>
            <person name="Connor R."/>
            <person name="Davies R.M."/>
            <person name="Devlin K."/>
            <person name="Feltwell T."/>
            <person name="Gentles S."/>
            <person name="Hamlin N."/>
            <person name="Holroyd S."/>
            <person name="Hornsby T."/>
            <person name="Jagels K."/>
            <person name="Krogh A."/>
            <person name="McLean J."/>
            <person name="Moule S."/>
            <person name="Murphy L.D."/>
            <person name="Oliver S."/>
            <person name="Osborne J."/>
            <person name="Quail M.A."/>
            <person name="Rajandream M.A."/>
            <person name="Rogers J."/>
            <person name="Rutter S."/>
            <person name="Seeger K."/>
            <person name="Skelton S."/>
            <person name="Squares S."/>
            <person name="Squares R."/>
            <person name="Sulston J.E."/>
            <person name="Taylor K."/>
            <person name="Whitehead S."/>
            <person name="Barrell B.G."/>
        </authorList>
    </citation>
    <scope>NUCLEOTIDE SEQUENCE [LARGE SCALE GENOMIC DNA]</scope>
    <source>
        <strain>ATCC 25618 / H37Rv</strain>
    </source>
</reference>
<reference key="2">
    <citation type="journal article" date="2011" name="Mol. Cell. Proteomics">
        <title>Proteogenomic analysis of Mycobacterium tuberculosis by high resolution mass spectrometry.</title>
        <authorList>
            <person name="Kelkar D.S."/>
            <person name="Kumar D."/>
            <person name="Kumar P."/>
            <person name="Balakrishnan L."/>
            <person name="Muthusamy B."/>
            <person name="Yadav A.K."/>
            <person name="Shrivastava P."/>
            <person name="Marimuthu A."/>
            <person name="Anand S."/>
            <person name="Sundaram H."/>
            <person name="Kingsbury R."/>
            <person name="Harsha H.C."/>
            <person name="Nair B."/>
            <person name="Prasad T.S."/>
            <person name="Chauhan D.S."/>
            <person name="Katoch K."/>
            <person name="Katoch V.M."/>
            <person name="Kumar P."/>
            <person name="Chaerkady R."/>
            <person name="Ramachandran S."/>
            <person name="Dash D."/>
            <person name="Pandey A."/>
        </authorList>
    </citation>
    <scope>IDENTIFICATION BY MASS SPECTROMETRY [LARGE SCALE ANALYSIS]</scope>
    <source>
        <strain>ATCC 25618 / H37Rv</strain>
    </source>
</reference>
<keyword id="KW-0002">3D-structure</keyword>
<keyword id="KW-0501">Molybdenum cofactor biosynthesis</keyword>
<keyword id="KW-1185">Reference proteome</keyword>
<keyword id="KW-0808">Transferase</keyword>
<accession>P9WJR3</accession>
<accession>L0TED5</accession>
<accession>O05795</accession>
<comment type="function">
    <text evidence="1">Converts molybdopterin precursor Z into molybdopterin. This requires the incorporation of two sulfur atoms into precursor Z to generate a dithiolene group. The sulfur is provided by MoaD (By similarity).</text>
</comment>
<comment type="catalytic activity">
    <reaction>
        <text>2 [molybdopterin-synthase sulfur-carrier protein]-C-terminal-Gly-aminoethanethioate + cyclic pyranopterin phosphate + H2O = molybdopterin + 2 [molybdopterin-synthase sulfur-carrier protein]-C-terminal Gly-Gly + 2 H(+)</text>
        <dbReference type="Rhea" id="RHEA:26333"/>
        <dbReference type="Rhea" id="RHEA-COMP:12202"/>
        <dbReference type="Rhea" id="RHEA-COMP:19907"/>
        <dbReference type="ChEBI" id="CHEBI:15377"/>
        <dbReference type="ChEBI" id="CHEBI:15378"/>
        <dbReference type="ChEBI" id="CHEBI:58698"/>
        <dbReference type="ChEBI" id="CHEBI:59648"/>
        <dbReference type="ChEBI" id="CHEBI:90778"/>
        <dbReference type="ChEBI" id="CHEBI:232372"/>
        <dbReference type="EC" id="2.8.1.12"/>
    </reaction>
</comment>
<comment type="pathway">
    <text>Cofactor biosynthesis; molybdopterin biosynthesis.</text>
</comment>
<comment type="subunit">
    <text evidence="1">Heterotetramer of 2 MoaD subunits and 2 MoaE subunits. Also stable as homodimer. The enzyme changes between these two forms during catalysis (By similarity).</text>
</comment>
<comment type="similarity">
    <text evidence="2">Belongs to the MoaE family.</text>
</comment>
<sequence>MANVVAEGAYPYCRLTDQPLSVDEVLAAVSGPEQGGIVIFVGNVRDHNAGHDVTRLFYEAYPPMVIRTLMSIIGRCEDKAEGVRVAVAHRTGELQIGDAAVVIGASAPHRAEAFDAARMCIELLKQEVPIWKKEFSSTGAEWVGDRP</sequence>
<protein>
    <recommendedName>
        <fullName>Molybdopterin synthase catalytic subunit 1</fullName>
        <ecNumber>2.8.1.12</ecNumber>
    </recommendedName>
    <alternativeName>
        <fullName>MPT synthase subunit 2 1</fullName>
    </alternativeName>
    <alternativeName>
        <fullName>Molybdenum cofactor biosynthesis protein E 1</fullName>
    </alternativeName>
    <alternativeName>
        <fullName>Molybdopterin-converting factor large subunit 1</fullName>
    </alternativeName>
    <alternativeName>
        <fullName>Molybdopterin-converting factor subunit 2 1</fullName>
    </alternativeName>
</protein>
<gene>
    <name type="primary">moaE1</name>
    <name type="synonym">moaE</name>
    <name type="ordered locus">Rv3119</name>
    <name type="ORF">MTCY164.29</name>
</gene>
<feature type="chain" id="PRO_0000163087" description="Molybdopterin synthase catalytic subunit 1">
    <location>
        <begin position="1"/>
        <end position="147"/>
    </location>
</feature>
<feature type="binding site" evidence="1">
    <location>
        <begin position="43"/>
        <end position="45"/>
    </location>
    <ligand>
        <name>substrate</name>
    </ligand>
</feature>
<feature type="binding site" evidence="1">
    <location>
        <begin position="109"/>
        <end position="110"/>
    </location>
    <ligand>
        <name>substrate</name>
    </ligand>
</feature>
<feature type="binding site" evidence="1">
    <location>
        <position position="125"/>
    </location>
    <ligand>
        <name>substrate</name>
    </ligand>
</feature>
<feature type="binding site" evidence="1">
    <location>
        <begin position="132"/>
        <end position="134"/>
    </location>
    <ligand>
        <name>substrate</name>
    </ligand>
</feature>
<feature type="strand" evidence="3">
    <location>
        <begin position="3"/>
        <end position="6"/>
    </location>
</feature>
<feature type="strand" evidence="3">
    <location>
        <begin position="13"/>
        <end position="18"/>
    </location>
</feature>
<feature type="helix" evidence="3">
    <location>
        <begin position="22"/>
        <end position="29"/>
    </location>
</feature>
<feature type="strand" evidence="3">
    <location>
        <begin position="36"/>
        <end position="43"/>
    </location>
</feature>
<feature type="strand" evidence="3">
    <location>
        <begin position="55"/>
        <end position="59"/>
    </location>
</feature>
<feature type="helix" evidence="3">
    <location>
        <begin position="62"/>
        <end position="77"/>
    </location>
</feature>
<feature type="strand" evidence="3">
    <location>
        <begin position="84"/>
        <end position="90"/>
    </location>
</feature>
<feature type="strand" evidence="3">
    <location>
        <begin position="92"/>
        <end position="94"/>
    </location>
</feature>
<feature type="strand" evidence="3">
    <location>
        <begin position="99"/>
        <end position="109"/>
    </location>
</feature>
<feature type="helix" evidence="3">
    <location>
        <begin position="110"/>
        <end position="127"/>
    </location>
</feature>
<feature type="strand" evidence="3">
    <location>
        <begin position="131"/>
        <end position="135"/>
    </location>
</feature>
<dbReference type="EC" id="2.8.1.12"/>
<dbReference type="EMBL" id="AL123456">
    <property type="protein sequence ID" value="CCP45929.1"/>
    <property type="molecule type" value="Genomic_DNA"/>
</dbReference>
<dbReference type="PIR" id="F70921">
    <property type="entry name" value="F70921"/>
</dbReference>
<dbReference type="RefSeq" id="WP_003899923.1">
    <property type="nucleotide sequence ID" value="NZ_NVQJ01000019.1"/>
</dbReference>
<dbReference type="RefSeq" id="YP_177931.1">
    <property type="nucleotide sequence ID" value="NC_000962.3"/>
</dbReference>
<dbReference type="PDB" id="2WP4">
    <property type="method" value="X-ray"/>
    <property type="resolution" value="2.49 A"/>
    <property type="chains" value="A/B=1-147"/>
</dbReference>
<dbReference type="PDBsum" id="2WP4"/>
<dbReference type="SMR" id="P9WJR3"/>
<dbReference type="FunCoup" id="P9WJR3">
    <property type="interactions" value="395"/>
</dbReference>
<dbReference type="STRING" id="83332.Rv3119"/>
<dbReference type="PaxDb" id="83332-Rv3119"/>
<dbReference type="DNASU" id="888811"/>
<dbReference type="GeneID" id="888811"/>
<dbReference type="KEGG" id="mtu:Rv3119"/>
<dbReference type="KEGG" id="mtv:RVBD_3119"/>
<dbReference type="TubercuList" id="Rv3119"/>
<dbReference type="eggNOG" id="COG0314">
    <property type="taxonomic scope" value="Bacteria"/>
</dbReference>
<dbReference type="InParanoid" id="P9WJR3"/>
<dbReference type="OrthoDB" id="9794429at2"/>
<dbReference type="PhylomeDB" id="P9WJR3"/>
<dbReference type="UniPathway" id="UPA00344"/>
<dbReference type="EvolutionaryTrace" id="P9WJR3"/>
<dbReference type="Proteomes" id="UP000001584">
    <property type="component" value="Chromosome"/>
</dbReference>
<dbReference type="GO" id="GO:0005829">
    <property type="term" value="C:cytosol"/>
    <property type="evidence" value="ECO:0000318"/>
    <property type="project" value="GO_Central"/>
</dbReference>
<dbReference type="GO" id="GO:0030366">
    <property type="term" value="F:molybdopterin synthase activity"/>
    <property type="evidence" value="ECO:0007669"/>
    <property type="project" value="UniProtKB-EC"/>
</dbReference>
<dbReference type="GO" id="GO:0006777">
    <property type="term" value="P:Mo-molybdopterin cofactor biosynthetic process"/>
    <property type="evidence" value="ECO:0000314"/>
    <property type="project" value="MTBBASE"/>
</dbReference>
<dbReference type="CDD" id="cd00756">
    <property type="entry name" value="MoaE"/>
    <property type="match status" value="1"/>
</dbReference>
<dbReference type="FunFam" id="3.90.1170.40:FF:000004">
    <property type="entry name" value="Molybdopterin biosynthesis protein MoeE"/>
    <property type="match status" value="1"/>
</dbReference>
<dbReference type="Gene3D" id="3.90.1170.40">
    <property type="entry name" value="Molybdopterin biosynthesis MoaE subunit"/>
    <property type="match status" value="1"/>
</dbReference>
<dbReference type="InterPro" id="IPR036563">
    <property type="entry name" value="MoaE_sf"/>
</dbReference>
<dbReference type="InterPro" id="IPR003448">
    <property type="entry name" value="Mopterin_biosynth_MoaE"/>
</dbReference>
<dbReference type="PANTHER" id="PTHR23404">
    <property type="entry name" value="MOLYBDOPTERIN SYNTHASE RELATED"/>
    <property type="match status" value="1"/>
</dbReference>
<dbReference type="Pfam" id="PF02391">
    <property type="entry name" value="MoaE"/>
    <property type="match status" value="1"/>
</dbReference>
<dbReference type="SUPFAM" id="SSF54690">
    <property type="entry name" value="Molybdopterin synthase subunit MoaE"/>
    <property type="match status" value="1"/>
</dbReference>
<proteinExistence type="evidence at protein level"/>
<organism>
    <name type="scientific">Mycobacterium tuberculosis (strain ATCC 25618 / H37Rv)</name>
    <dbReference type="NCBI Taxonomy" id="83332"/>
    <lineage>
        <taxon>Bacteria</taxon>
        <taxon>Bacillati</taxon>
        <taxon>Actinomycetota</taxon>
        <taxon>Actinomycetes</taxon>
        <taxon>Mycobacteriales</taxon>
        <taxon>Mycobacteriaceae</taxon>
        <taxon>Mycobacterium</taxon>
        <taxon>Mycobacterium tuberculosis complex</taxon>
    </lineage>
</organism>
<evidence type="ECO:0000250" key="1"/>
<evidence type="ECO:0000305" key="2"/>
<evidence type="ECO:0007829" key="3">
    <source>
        <dbReference type="PDB" id="2WP4"/>
    </source>
</evidence>